<feature type="chain" id="PRO_0000243934" description="Profilin-3">
    <location>
        <begin position="1"/>
        <end position="137"/>
    </location>
</feature>
<comment type="function">
    <text evidence="1">Binds to actin and affects the structure of the cytoskeleton. Binds to poly-L-proline, phosphatidylinositol 3-phosphate (PtdIns(3)P), phosphatidylinositol 4,5-bisphosphate (PtdIns(4,5)P2) and phosphatidylinositol 4-phosphate (PtdIns(4)P). Slightly reduces actin polymerization. May be involved in spermatogenesis.</text>
</comment>
<comment type="subunit">
    <text evidence="1">Interacts with ACTRT3.</text>
</comment>
<comment type="subcellular location">
    <subcellularLocation>
        <location evidence="1">Cytoplasm</location>
        <location evidence="1">Cytoskeleton</location>
    </subcellularLocation>
    <subcellularLocation>
        <location evidence="1">Nucleus</location>
    </subcellularLocation>
</comment>
<comment type="similarity">
    <text evidence="2">Belongs to the profilin family.</text>
</comment>
<protein>
    <recommendedName>
        <fullName>Profilin-3</fullName>
    </recommendedName>
</protein>
<reference key="1">
    <citation type="submission" date="2005-10" db="EMBL/GenBank/DDBJ databases">
        <authorList>
            <consortium name="NIH - Mammalian Gene Collection (MGC) project"/>
        </authorList>
    </citation>
    <scope>NUCLEOTIDE SEQUENCE [LARGE SCALE MRNA]</scope>
    <source>
        <strain>Crossbred X Angus</strain>
        <tissue>Liver</tissue>
    </source>
</reference>
<gene>
    <name type="primary">PFN3</name>
</gene>
<sequence>MGDWKGYISAVLRDQRIDDVAIVGHSDNRCVWASRPGGLLAAISPQEVGVLTGPDRSTFLQAGLCVAGRRCCVIRDHLLAEGDGVLDARTKGLDGRAICVGHTPRALLVLMGRRGVHGGILNKTMHELIHGLRSQGT</sequence>
<evidence type="ECO:0000250" key="1"/>
<evidence type="ECO:0000305" key="2"/>
<organism>
    <name type="scientific">Bos taurus</name>
    <name type="common">Bovine</name>
    <dbReference type="NCBI Taxonomy" id="9913"/>
    <lineage>
        <taxon>Eukaryota</taxon>
        <taxon>Metazoa</taxon>
        <taxon>Chordata</taxon>
        <taxon>Craniata</taxon>
        <taxon>Vertebrata</taxon>
        <taxon>Euteleostomi</taxon>
        <taxon>Mammalia</taxon>
        <taxon>Eutheria</taxon>
        <taxon>Laurasiatheria</taxon>
        <taxon>Artiodactyla</taxon>
        <taxon>Ruminantia</taxon>
        <taxon>Pecora</taxon>
        <taxon>Bovidae</taxon>
        <taxon>Bovinae</taxon>
        <taxon>Bos</taxon>
    </lineage>
</organism>
<name>PROF3_BOVIN</name>
<accession>Q32PB1</accession>
<dbReference type="EMBL" id="BC108188">
    <property type="protein sequence ID" value="AAI08189.1"/>
    <property type="molecule type" value="mRNA"/>
</dbReference>
<dbReference type="RefSeq" id="NP_001071413.1">
    <property type="nucleotide sequence ID" value="NM_001077945.2"/>
</dbReference>
<dbReference type="SMR" id="Q32PB1"/>
<dbReference type="FunCoup" id="Q32PB1">
    <property type="interactions" value="304"/>
</dbReference>
<dbReference type="STRING" id="9913.ENSBTAP00000054439"/>
<dbReference type="PaxDb" id="9913-ENSBTAP00000054439"/>
<dbReference type="Ensembl" id="ENSBTAT00000027123.6">
    <property type="protein sequence ID" value="ENSBTAP00000054439.1"/>
    <property type="gene ID" value="ENSBTAG00000020353.6"/>
</dbReference>
<dbReference type="Ensembl" id="ENSBTAT00000084837.2">
    <property type="protein sequence ID" value="ENSBTAP00000073729.2"/>
    <property type="gene ID" value="ENSBTAG00000020353.6"/>
</dbReference>
<dbReference type="GeneID" id="521379"/>
<dbReference type="KEGG" id="bta:521379"/>
<dbReference type="CTD" id="345456"/>
<dbReference type="VEuPathDB" id="HostDB:ENSBTAG00000020353"/>
<dbReference type="VGNC" id="VGNC:32777">
    <property type="gene designation" value="PFN3"/>
</dbReference>
<dbReference type="eggNOG" id="ENOG502S2A3">
    <property type="taxonomic scope" value="Eukaryota"/>
</dbReference>
<dbReference type="GeneTree" id="ENSGT00940000153664"/>
<dbReference type="HOGENOM" id="CLU_123405_1_0_1"/>
<dbReference type="InParanoid" id="Q32PB1"/>
<dbReference type="OMA" id="VCVGHTP"/>
<dbReference type="OrthoDB" id="421374at2759"/>
<dbReference type="TreeFam" id="TF331744"/>
<dbReference type="Proteomes" id="UP000009136">
    <property type="component" value="Chromosome 7"/>
</dbReference>
<dbReference type="Bgee" id="ENSBTAG00000020353">
    <property type="expression patterns" value="Expressed in semen and 40 other cell types or tissues"/>
</dbReference>
<dbReference type="GO" id="GO:0005737">
    <property type="term" value="C:cytoplasm"/>
    <property type="evidence" value="ECO:0000318"/>
    <property type="project" value="GO_Central"/>
</dbReference>
<dbReference type="GO" id="GO:0005856">
    <property type="term" value="C:cytoskeleton"/>
    <property type="evidence" value="ECO:0007669"/>
    <property type="project" value="UniProtKB-SubCell"/>
</dbReference>
<dbReference type="GO" id="GO:0005634">
    <property type="term" value="C:nucleus"/>
    <property type="evidence" value="ECO:0007669"/>
    <property type="project" value="UniProtKB-SubCell"/>
</dbReference>
<dbReference type="GO" id="GO:0003779">
    <property type="term" value="F:actin binding"/>
    <property type="evidence" value="ECO:0000318"/>
    <property type="project" value="GO_Central"/>
</dbReference>
<dbReference type="GO" id="GO:0008289">
    <property type="term" value="F:lipid binding"/>
    <property type="evidence" value="ECO:0007669"/>
    <property type="project" value="UniProtKB-KW"/>
</dbReference>
<dbReference type="GO" id="GO:0030036">
    <property type="term" value="P:actin cytoskeleton organization"/>
    <property type="evidence" value="ECO:0007669"/>
    <property type="project" value="InterPro"/>
</dbReference>
<dbReference type="GO" id="GO:0032233">
    <property type="term" value="P:positive regulation of actin filament bundle assembly"/>
    <property type="evidence" value="ECO:0000318"/>
    <property type="project" value="GO_Central"/>
</dbReference>
<dbReference type="GO" id="GO:0030833">
    <property type="term" value="P:regulation of actin filament polymerization"/>
    <property type="evidence" value="ECO:0000318"/>
    <property type="project" value="GO_Central"/>
</dbReference>
<dbReference type="CDD" id="cd00148">
    <property type="entry name" value="PROF"/>
    <property type="match status" value="1"/>
</dbReference>
<dbReference type="FunFam" id="3.30.450.30:FF:000010">
    <property type="entry name" value="Profilin"/>
    <property type="match status" value="1"/>
</dbReference>
<dbReference type="Gene3D" id="3.30.450.30">
    <property type="entry name" value="Dynein light chain 2a, cytoplasmic"/>
    <property type="match status" value="1"/>
</dbReference>
<dbReference type="InterPro" id="IPR048278">
    <property type="entry name" value="PFN"/>
</dbReference>
<dbReference type="InterPro" id="IPR005455">
    <property type="entry name" value="PFN_euk"/>
</dbReference>
<dbReference type="InterPro" id="IPR036140">
    <property type="entry name" value="PFN_sf"/>
</dbReference>
<dbReference type="InterPro" id="IPR005454">
    <property type="entry name" value="Profilin1/2/3_vertebrate"/>
</dbReference>
<dbReference type="PANTHER" id="PTHR13936">
    <property type="entry name" value="PROFILIN"/>
    <property type="match status" value="1"/>
</dbReference>
<dbReference type="PANTHER" id="PTHR13936:SF2">
    <property type="entry name" value="PROFILIN-3"/>
    <property type="match status" value="1"/>
</dbReference>
<dbReference type="Pfam" id="PF00235">
    <property type="entry name" value="Profilin"/>
    <property type="match status" value="1"/>
</dbReference>
<dbReference type="PRINTS" id="PR01639">
    <property type="entry name" value="PROFILINMAML"/>
</dbReference>
<dbReference type="SMART" id="SM00392">
    <property type="entry name" value="PROF"/>
    <property type="match status" value="1"/>
</dbReference>
<dbReference type="SUPFAM" id="SSF55770">
    <property type="entry name" value="Profilin (actin-binding protein)"/>
    <property type="match status" value="1"/>
</dbReference>
<proteinExistence type="evidence at transcript level"/>
<keyword id="KW-0009">Actin-binding</keyword>
<keyword id="KW-0963">Cytoplasm</keyword>
<keyword id="KW-0206">Cytoskeleton</keyword>
<keyword id="KW-0446">Lipid-binding</keyword>
<keyword id="KW-0539">Nucleus</keyword>
<keyword id="KW-1185">Reference proteome</keyword>